<name>SCXE_BUTOC</name>
<proteinExistence type="evidence at transcript level"/>
<dbReference type="EMBL" id="X92376">
    <property type="protein sequence ID" value="CAA63120.1"/>
    <property type="molecule type" value="mRNA"/>
</dbReference>
<dbReference type="PIR" id="S68906">
    <property type="entry name" value="S68906"/>
</dbReference>
<dbReference type="SMR" id="Q17254"/>
<dbReference type="GO" id="GO:0005576">
    <property type="term" value="C:extracellular region"/>
    <property type="evidence" value="ECO:0007669"/>
    <property type="project" value="UniProtKB-SubCell"/>
</dbReference>
<dbReference type="GO" id="GO:0019871">
    <property type="term" value="F:sodium channel inhibitor activity"/>
    <property type="evidence" value="ECO:0007669"/>
    <property type="project" value="InterPro"/>
</dbReference>
<dbReference type="GO" id="GO:0090729">
    <property type="term" value="F:toxin activity"/>
    <property type="evidence" value="ECO:0007669"/>
    <property type="project" value="UniProtKB-KW"/>
</dbReference>
<dbReference type="GO" id="GO:0006952">
    <property type="term" value="P:defense response"/>
    <property type="evidence" value="ECO:0007669"/>
    <property type="project" value="InterPro"/>
</dbReference>
<dbReference type="CDD" id="cd23106">
    <property type="entry name" value="neurotoxins_LC_scorpion"/>
    <property type="match status" value="1"/>
</dbReference>
<dbReference type="Gene3D" id="3.30.30.10">
    <property type="entry name" value="Knottin, scorpion toxin-like"/>
    <property type="match status" value="1"/>
</dbReference>
<dbReference type="InterPro" id="IPR044062">
    <property type="entry name" value="LCN-type_CS_alpha_beta_dom"/>
</dbReference>
<dbReference type="InterPro" id="IPR003614">
    <property type="entry name" value="Scorpion_toxin-like"/>
</dbReference>
<dbReference type="InterPro" id="IPR036574">
    <property type="entry name" value="Scorpion_toxin-like_sf"/>
</dbReference>
<dbReference type="InterPro" id="IPR018218">
    <property type="entry name" value="Scorpion_toxinL"/>
</dbReference>
<dbReference type="InterPro" id="IPR002061">
    <property type="entry name" value="Scorpion_toxinL/defensin"/>
</dbReference>
<dbReference type="Pfam" id="PF00537">
    <property type="entry name" value="Toxin_3"/>
    <property type="match status" value="1"/>
</dbReference>
<dbReference type="PRINTS" id="PR00285">
    <property type="entry name" value="SCORPNTOXIN"/>
</dbReference>
<dbReference type="SMART" id="SM00505">
    <property type="entry name" value="Knot1"/>
    <property type="match status" value="1"/>
</dbReference>
<dbReference type="SUPFAM" id="SSF57095">
    <property type="entry name" value="Scorpion toxin-like"/>
    <property type="match status" value="1"/>
</dbReference>
<dbReference type="PROSITE" id="PS51863">
    <property type="entry name" value="LCN_CSAB"/>
    <property type="match status" value="1"/>
</dbReference>
<accession>Q17254</accession>
<evidence type="ECO:0000255" key="1"/>
<evidence type="ECO:0000255" key="2">
    <source>
        <dbReference type="PROSITE-ProRule" id="PRU01210"/>
    </source>
</evidence>
<evidence type="ECO:0000269" key="3">
    <source>
    </source>
</evidence>
<evidence type="ECO:0000305" key="4"/>
<organism>
    <name type="scientific">Buthus occitanus tunetanus</name>
    <name type="common">Common European scorpion</name>
    <name type="synonym">Buthus tunetanus</name>
    <dbReference type="NCBI Taxonomy" id="6871"/>
    <lineage>
        <taxon>Eukaryota</taxon>
        <taxon>Metazoa</taxon>
        <taxon>Ecdysozoa</taxon>
        <taxon>Arthropoda</taxon>
        <taxon>Chelicerata</taxon>
        <taxon>Arachnida</taxon>
        <taxon>Scorpiones</taxon>
        <taxon>Buthida</taxon>
        <taxon>Buthoidea</taxon>
        <taxon>Buthidae</taxon>
        <taxon>Buthus</taxon>
    </lineage>
</organism>
<reference key="1">
    <citation type="journal article" date="1996" name="Eur. J. Biochem.">
        <title>A recombinant insect-specific alpha-toxin of Buthus occitanus tunetanus scorpion confers protection against homologous mammal toxins.</title>
        <authorList>
            <person name="Bouhaouala-Zahar B."/>
            <person name="Ducancel F."/>
            <person name="Zenouaki I."/>
            <person name="Ben Khalifa R."/>
            <person name="Borchani L."/>
            <person name="Pelhate M."/>
            <person name="Boulain J.-C."/>
            <person name="el Ayeb M."/>
            <person name="Menez A."/>
            <person name="Karoui H."/>
        </authorList>
    </citation>
    <scope>NUCLEOTIDE SEQUENCE [MRNA]</scope>
    <scope>FUNCTION</scope>
    <source>
        <tissue>Venom gland</tissue>
    </source>
</reference>
<keyword id="KW-1015">Disulfide bond</keyword>
<keyword id="KW-0872">Ion channel impairing toxin</keyword>
<keyword id="KW-0528">Neurotoxin</keyword>
<keyword id="KW-0964">Secreted</keyword>
<keyword id="KW-0732">Signal</keyword>
<keyword id="KW-0800">Toxin</keyword>
<keyword id="KW-0738">Voltage-gated sodium channel impairing toxin</keyword>
<protein>
    <recommendedName>
        <fullName>Alpha-insect toxin Bot14</fullName>
    </recommendedName>
    <alternativeName>
        <fullName>BotXIV</fullName>
    </alternativeName>
    <alternativeName>
        <fullName>Neurotoxin XIV</fullName>
    </alternativeName>
</protein>
<sequence length="85" mass="9174">MSSLMISTAMKGKAPYRQVRDGYIAQPHNCAYHCLKISSGCDTLCKENGATSGHCGHKSGHGSACWCKDLPDKVGIIVHGEKCHR</sequence>
<comment type="function">
    <text evidence="3">Alpha toxins bind voltage-independently at site-3 of sodium channels (Nav) and inhibit the inactivation of the activated channels, thereby blocking neuronal transmission. This toxin is active only on insects.</text>
</comment>
<comment type="subcellular location">
    <subcellularLocation>
        <location>Secreted</location>
    </subcellularLocation>
</comment>
<comment type="tissue specificity">
    <text>Expressed by the venom gland.</text>
</comment>
<comment type="domain">
    <text evidence="4">Has the structural arrangement of an alpha-helix connected to antiparallel beta-sheets by disulfide bonds (CS-alpha/beta).</text>
</comment>
<comment type="similarity">
    <text evidence="4">Belongs to the long (4 C-C) scorpion toxin superfamily. Sodium channel inhibitor family. Alpha subfamily.</text>
</comment>
<feature type="signal peptide" evidence="1">
    <location>
        <begin position="1"/>
        <end position="18"/>
    </location>
</feature>
<feature type="chain" id="PRO_0000035235" description="Alpha-insect toxin Bot14">
    <location>
        <begin position="19"/>
        <end position="85"/>
    </location>
</feature>
<feature type="domain" description="LCN-type CS-alpha/beta" evidence="2">
    <location>
        <begin position="20"/>
        <end position="84"/>
    </location>
</feature>
<feature type="disulfide bond" evidence="2">
    <location>
        <begin position="30"/>
        <end position="83"/>
    </location>
</feature>
<feature type="disulfide bond" evidence="2">
    <location>
        <begin position="34"/>
        <end position="55"/>
    </location>
</feature>
<feature type="disulfide bond" evidence="2">
    <location>
        <begin position="41"/>
        <end position="65"/>
    </location>
</feature>
<feature type="disulfide bond" evidence="2">
    <location>
        <begin position="45"/>
        <end position="67"/>
    </location>
</feature>